<organism>
    <name type="scientific">Campylobacter jejuni (strain RM1221)</name>
    <dbReference type="NCBI Taxonomy" id="195099"/>
    <lineage>
        <taxon>Bacteria</taxon>
        <taxon>Pseudomonadati</taxon>
        <taxon>Campylobacterota</taxon>
        <taxon>Epsilonproteobacteria</taxon>
        <taxon>Campylobacterales</taxon>
        <taxon>Campylobacteraceae</taxon>
        <taxon>Campylobacter</taxon>
    </lineage>
</organism>
<name>RUVB_CAMJR</name>
<keyword id="KW-0067">ATP-binding</keyword>
<keyword id="KW-0963">Cytoplasm</keyword>
<keyword id="KW-0227">DNA damage</keyword>
<keyword id="KW-0233">DNA recombination</keyword>
<keyword id="KW-0234">DNA repair</keyword>
<keyword id="KW-0238">DNA-binding</keyword>
<keyword id="KW-0378">Hydrolase</keyword>
<keyword id="KW-0547">Nucleotide-binding</keyword>
<proteinExistence type="inferred from homology"/>
<protein>
    <recommendedName>
        <fullName evidence="1">Holliday junction branch migration complex subunit RuvB</fullName>
        <ecNumber evidence="1">3.6.4.-</ecNumber>
    </recommendedName>
</protein>
<feature type="chain" id="PRO_0000165511" description="Holliday junction branch migration complex subunit RuvB">
    <location>
        <begin position="1"/>
        <end position="335"/>
    </location>
</feature>
<feature type="region of interest" description="Large ATPase domain (RuvB-L)" evidence="1">
    <location>
        <begin position="1"/>
        <end position="181"/>
    </location>
</feature>
<feature type="region of interest" description="Small ATPAse domain (RuvB-S)" evidence="1">
    <location>
        <begin position="182"/>
        <end position="252"/>
    </location>
</feature>
<feature type="region of interest" description="Head domain (RuvB-H)" evidence="1">
    <location>
        <begin position="255"/>
        <end position="335"/>
    </location>
</feature>
<feature type="binding site" evidence="1">
    <location>
        <position position="20"/>
    </location>
    <ligand>
        <name>ATP</name>
        <dbReference type="ChEBI" id="CHEBI:30616"/>
    </ligand>
</feature>
<feature type="binding site" evidence="1">
    <location>
        <position position="21"/>
    </location>
    <ligand>
        <name>ATP</name>
        <dbReference type="ChEBI" id="CHEBI:30616"/>
    </ligand>
</feature>
<feature type="binding site" evidence="1">
    <location>
        <position position="62"/>
    </location>
    <ligand>
        <name>ATP</name>
        <dbReference type="ChEBI" id="CHEBI:30616"/>
    </ligand>
</feature>
<feature type="binding site" evidence="1">
    <location>
        <position position="65"/>
    </location>
    <ligand>
        <name>ATP</name>
        <dbReference type="ChEBI" id="CHEBI:30616"/>
    </ligand>
</feature>
<feature type="binding site" evidence="1">
    <location>
        <position position="66"/>
    </location>
    <ligand>
        <name>ATP</name>
        <dbReference type="ChEBI" id="CHEBI:30616"/>
    </ligand>
</feature>
<feature type="binding site" evidence="1">
    <location>
        <position position="66"/>
    </location>
    <ligand>
        <name>Mg(2+)</name>
        <dbReference type="ChEBI" id="CHEBI:18420"/>
    </ligand>
</feature>
<feature type="binding site" evidence="1">
    <location>
        <position position="67"/>
    </location>
    <ligand>
        <name>ATP</name>
        <dbReference type="ChEBI" id="CHEBI:30616"/>
    </ligand>
</feature>
<feature type="binding site" evidence="1">
    <location>
        <begin position="128"/>
        <end position="130"/>
    </location>
    <ligand>
        <name>ATP</name>
        <dbReference type="ChEBI" id="CHEBI:30616"/>
    </ligand>
</feature>
<feature type="binding site" evidence="1">
    <location>
        <position position="171"/>
    </location>
    <ligand>
        <name>ATP</name>
        <dbReference type="ChEBI" id="CHEBI:30616"/>
    </ligand>
</feature>
<feature type="binding site" evidence="1">
    <location>
        <position position="181"/>
    </location>
    <ligand>
        <name>ATP</name>
        <dbReference type="ChEBI" id="CHEBI:30616"/>
    </ligand>
</feature>
<feature type="binding site" evidence="1">
    <location>
        <position position="218"/>
    </location>
    <ligand>
        <name>ATP</name>
        <dbReference type="ChEBI" id="CHEBI:30616"/>
    </ligand>
</feature>
<feature type="binding site" evidence="1">
    <location>
        <position position="309"/>
    </location>
    <ligand>
        <name>DNA</name>
        <dbReference type="ChEBI" id="CHEBI:16991"/>
    </ligand>
</feature>
<feature type="binding site" evidence="1">
    <location>
        <position position="314"/>
    </location>
    <ligand>
        <name>DNA</name>
        <dbReference type="ChEBI" id="CHEBI:16991"/>
    </ligand>
</feature>
<gene>
    <name evidence="1" type="primary">ruvB</name>
    <name type="ordered locus">CJE1554</name>
</gene>
<evidence type="ECO:0000255" key="1">
    <source>
        <dbReference type="HAMAP-Rule" id="MF_00016"/>
    </source>
</evidence>
<comment type="function">
    <text evidence="1">The RuvA-RuvB-RuvC complex processes Holliday junction (HJ) DNA during genetic recombination and DNA repair, while the RuvA-RuvB complex plays an important role in the rescue of blocked DNA replication forks via replication fork reversal (RFR). RuvA specifically binds to HJ cruciform DNA, conferring on it an open structure. The RuvB hexamer acts as an ATP-dependent pump, pulling dsDNA into and through the RuvAB complex. RuvB forms 2 homohexamers on either side of HJ DNA bound by 1 or 2 RuvA tetramers; 4 subunits per hexamer contact DNA at a time. Coordinated motions by a converter formed by DNA-disengaged RuvB subunits stimulates ATP hydrolysis and nucleotide exchange. Immobilization of the converter enables RuvB to convert the ATP-contained energy into a lever motion, pulling 2 nucleotides of DNA out of the RuvA tetramer per ATP hydrolyzed, thus driving DNA branch migration. The RuvB motors rotate together with the DNA substrate, which together with the progressing nucleotide cycle form the mechanistic basis for DNA recombination by continuous HJ branch migration. Branch migration allows RuvC to scan DNA until it finds its consensus sequence, where it cleaves and resolves cruciform DNA.</text>
</comment>
<comment type="catalytic activity">
    <reaction evidence="1">
        <text>ATP + H2O = ADP + phosphate + H(+)</text>
        <dbReference type="Rhea" id="RHEA:13065"/>
        <dbReference type="ChEBI" id="CHEBI:15377"/>
        <dbReference type="ChEBI" id="CHEBI:15378"/>
        <dbReference type="ChEBI" id="CHEBI:30616"/>
        <dbReference type="ChEBI" id="CHEBI:43474"/>
        <dbReference type="ChEBI" id="CHEBI:456216"/>
    </reaction>
</comment>
<comment type="subunit">
    <text evidence="1">Homohexamer. Forms an RuvA(8)-RuvB(12)-Holliday junction (HJ) complex. HJ DNA is sandwiched between 2 RuvA tetramers; dsDNA enters through RuvA and exits via RuvB. An RuvB hexamer assembles on each DNA strand where it exits the tetramer. Each RuvB hexamer is contacted by two RuvA subunits (via domain III) on 2 adjacent RuvB subunits; this complex drives branch migration. In the full resolvosome a probable DNA-RuvA(4)-RuvB(12)-RuvC(2) complex forms which resolves the HJ.</text>
</comment>
<comment type="subcellular location">
    <subcellularLocation>
        <location evidence="1">Cytoplasm</location>
    </subcellularLocation>
</comment>
<comment type="domain">
    <text evidence="1">Has 3 domains, the large (RuvB-L) and small ATPase (RuvB-S) domains and the C-terminal head (RuvB-H) domain. The head domain binds DNA, while the ATPase domains jointly bind ATP, ADP or are empty depending on the state of the subunit in the translocation cycle. During a single DNA translocation step the structure of each domain remains the same, but their relative positions change.</text>
</comment>
<comment type="similarity">
    <text evidence="1">Belongs to the RuvB family.</text>
</comment>
<sequence length="335" mass="37296">MDRIVEIEKYSFDETYETSLRPSNFDGYIGQESIKKNLNIFIAAAKKRNECLDHILFSGPAGLGKTTLANIISYEMGANIKTTAAPMIEKSGDLAAILTNLSEGDILFIDEIHRLSPAIEEVLYPAMEDYRLDIIIGSGPAAQTIKIDLPKFTLIGATTRAGMLSNPLRDRFGMQFRLEFYKDSELALILQKAALKLNKTCEEKAALEIAKRSRSTPRIALRLLKRVRDFADVNDEEIITEKRANEALNSLGVNELGFDAMDLRYLELLTAAKQKPIGLASIAAALSEDENTIEDVIEPYLLANGYIERTAKGRIASAKSYSALKLNYEKTLFEE</sequence>
<reference key="1">
    <citation type="journal article" date="2005" name="PLoS Biol.">
        <title>Major structural differences and novel potential virulence mechanisms from the genomes of multiple Campylobacter species.</title>
        <authorList>
            <person name="Fouts D.E."/>
            <person name="Mongodin E.F."/>
            <person name="Mandrell R.E."/>
            <person name="Miller W.G."/>
            <person name="Rasko D.A."/>
            <person name="Ravel J."/>
            <person name="Brinkac L.M."/>
            <person name="DeBoy R.T."/>
            <person name="Parker C.T."/>
            <person name="Daugherty S.C."/>
            <person name="Dodson R.J."/>
            <person name="Durkin A.S."/>
            <person name="Madupu R."/>
            <person name="Sullivan S.A."/>
            <person name="Shetty J.U."/>
            <person name="Ayodeji M.A."/>
            <person name="Shvartsbeyn A."/>
            <person name="Schatz M.C."/>
            <person name="Badger J.H."/>
            <person name="Fraser C.M."/>
            <person name="Nelson K.E."/>
        </authorList>
    </citation>
    <scope>NUCLEOTIDE SEQUENCE [LARGE SCALE GENOMIC DNA]</scope>
    <source>
        <strain>RM1221</strain>
    </source>
</reference>
<dbReference type="EC" id="3.6.4.-" evidence="1"/>
<dbReference type="EMBL" id="CP000025">
    <property type="protein sequence ID" value="AAW35989.1"/>
    <property type="molecule type" value="Genomic_DNA"/>
</dbReference>
<dbReference type="RefSeq" id="WP_002859650.1">
    <property type="nucleotide sequence ID" value="NC_003912.7"/>
</dbReference>
<dbReference type="SMR" id="Q5HT48"/>
<dbReference type="KEGG" id="cjr:CJE1554"/>
<dbReference type="HOGENOM" id="CLU_055599_1_0_7"/>
<dbReference type="GO" id="GO:0005737">
    <property type="term" value="C:cytoplasm"/>
    <property type="evidence" value="ECO:0007669"/>
    <property type="project" value="UniProtKB-SubCell"/>
</dbReference>
<dbReference type="GO" id="GO:0048476">
    <property type="term" value="C:Holliday junction resolvase complex"/>
    <property type="evidence" value="ECO:0007669"/>
    <property type="project" value="UniProtKB-UniRule"/>
</dbReference>
<dbReference type="GO" id="GO:0005524">
    <property type="term" value="F:ATP binding"/>
    <property type="evidence" value="ECO:0007669"/>
    <property type="project" value="UniProtKB-UniRule"/>
</dbReference>
<dbReference type="GO" id="GO:0016887">
    <property type="term" value="F:ATP hydrolysis activity"/>
    <property type="evidence" value="ECO:0007669"/>
    <property type="project" value="InterPro"/>
</dbReference>
<dbReference type="GO" id="GO:0000400">
    <property type="term" value="F:four-way junction DNA binding"/>
    <property type="evidence" value="ECO:0007669"/>
    <property type="project" value="UniProtKB-UniRule"/>
</dbReference>
<dbReference type="GO" id="GO:0009378">
    <property type="term" value="F:four-way junction helicase activity"/>
    <property type="evidence" value="ECO:0007669"/>
    <property type="project" value="InterPro"/>
</dbReference>
<dbReference type="GO" id="GO:0006310">
    <property type="term" value="P:DNA recombination"/>
    <property type="evidence" value="ECO:0007669"/>
    <property type="project" value="UniProtKB-UniRule"/>
</dbReference>
<dbReference type="GO" id="GO:0006281">
    <property type="term" value="P:DNA repair"/>
    <property type="evidence" value="ECO:0007669"/>
    <property type="project" value="UniProtKB-UniRule"/>
</dbReference>
<dbReference type="CDD" id="cd00009">
    <property type="entry name" value="AAA"/>
    <property type="match status" value="1"/>
</dbReference>
<dbReference type="Gene3D" id="1.10.8.60">
    <property type="match status" value="1"/>
</dbReference>
<dbReference type="Gene3D" id="3.40.50.300">
    <property type="entry name" value="P-loop containing nucleotide triphosphate hydrolases"/>
    <property type="match status" value="1"/>
</dbReference>
<dbReference type="Gene3D" id="1.10.10.10">
    <property type="entry name" value="Winged helix-like DNA-binding domain superfamily/Winged helix DNA-binding domain"/>
    <property type="match status" value="1"/>
</dbReference>
<dbReference type="HAMAP" id="MF_00016">
    <property type="entry name" value="DNA_HJ_migration_RuvB"/>
    <property type="match status" value="1"/>
</dbReference>
<dbReference type="InterPro" id="IPR003593">
    <property type="entry name" value="AAA+_ATPase"/>
</dbReference>
<dbReference type="InterPro" id="IPR041445">
    <property type="entry name" value="AAA_lid_4"/>
</dbReference>
<dbReference type="InterPro" id="IPR004605">
    <property type="entry name" value="DNA_helicase_Holl-junc_RuvB"/>
</dbReference>
<dbReference type="InterPro" id="IPR027417">
    <property type="entry name" value="P-loop_NTPase"/>
</dbReference>
<dbReference type="InterPro" id="IPR008824">
    <property type="entry name" value="RuvB-like_N"/>
</dbReference>
<dbReference type="InterPro" id="IPR008823">
    <property type="entry name" value="RuvB_C"/>
</dbReference>
<dbReference type="InterPro" id="IPR036388">
    <property type="entry name" value="WH-like_DNA-bd_sf"/>
</dbReference>
<dbReference type="InterPro" id="IPR036390">
    <property type="entry name" value="WH_DNA-bd_sf"/>
</dbReference>
<dbReference type="NCBIfam" id="NF000868">
    <property type="entry name" value="PRK00080.1"/>
    <property type="match status" value="1"/>
</dbReference>
<dbReference type="NCBIfam" id="TIGR00635">
    <property type="entry name" value="ruvB"/>
    <property type="match status" value="1"/>
</dbReference>
<dbReference type="PANTHER" id="PTHR42848">
    <property type="match status" value="1"/>
</dbReference>
<dbReference type="PANTHER" id="PTHR42848:SF1">
    <property type="entry name" value="HOLLIDAY JUNCTION BRANCH MIGRATION COMPLEX SUBUNIT RUVB"/>
    <property type="match status" value="1"/>
</dbReference>
<dbReference type="Pfam" id="PF17864">
    <property type="entry name" value="AAA_lid_4"/>
    <property type="match status" value="1"/>
</dbReference>
<dbReference type="Pfam" id="PF05491">
    <property type="entry name" value="RuvB_C"/>
    <property type="match status" value="1"/>
</dbReference>
<dbReference type="Pfam" id="PF05496">
    <property type="entry name" value="RuvB_N"/>
    <property type="match status" value="1"/>
</dbReference>
<dbReference type="SMART" id="SM00382">
    <property type="entry name" value="AAA"/>
    <property type="match status" value="1"/>
</dbReference>
<dbReference type="SUPFAM" id="SSF52540">
    <property type="entry name" value="P-loop containing nucleoside triphosphate hydrolases"/>
    <property type="match status" value="1"/>
</dbReference>
<dbReference type="SUPFAM" id="SSF46785">
    <property type="entry name" value="Winged helix' DNA-binding domain"/>
    <property type="match status" value="1"/>
</dbReference>
<accession>Q5HT48</accession>